<name>SYM_VIBC3</name>
<comment type="function">
    <text evidence="1">Is required not only for elongation of protein synthesis but also for the initiation of all mRNA translation through initiator tRNA(fMet) aminoacylation.</text>
</comment>
<comment type="catalytic activity">
    <reaction evidence="1">
        <text>tRNA(Met) + L-methionine + ATP = L-methionyl-tRNA(Met) + AMP + diphosphate</text>
        <dbReference type="Rhea" id="RHEA:13481"/>
        <dbReference type="Rhea" id="RHEA-COMP:9667"/>
        <dbReference type="Rhea" id="RHEA-COMP:9698"/>
        <dbReference type="ChEBI" id="CHEBI:30616"/>
        <dbReference type="ChEBI" id="CHEBI:33019"/>
        <dbReference type="ChEBI" id="CHEBI:57844"/>
        <dbReference type="ChEBI" id="CHEBI:78442"/>
        <dbReference type="ChEBI" id="CHEBI:78530"/>
        <dbReference type="ChEBI" id="CHEBI:456215"/>
        <dbReference type="EC" id="6.1.1.10"/>
    </reaction>
</comment>
<comment type="cofactor">
    <cofactor evidence="1">
        <name>Zn(2+)</name>
        <dbReference type="ChEBI" id="CHEBI:29105"/>
    </cofactor>
    <text evidence="1">Binds 1 zinc ion per subunit.</text>
</comment>
<comment type="subunit">
    <text evidence="1">Homodimer.</text>
</comment>
<comment type="subcellular location">
    <subcellularLocation>
        <location evidence="1">Cytoplasm</location>
    </subcellularLocation>
</comment>
<comment type="similarity">
    <text evidence="1">Belongs to the class-I aminoacyl-tRNA synthetase family. MetG type 1 subfamily.</text>
</comment>
<comment type="sequence caution" evidence="2">
    <conflict type="erroneous initiation">
        <sequence resource="EMBL-CDS" id="ABQ19760"/>
    </conflict>
</comment>
<comment type="sequence caution" evidence="2">
    <conflict type="erroneous initiation">
        <sequence resource="EMBL-CDS" id="ACP09062"/>
    </conflict>
</comment>
<evidence type="ECO:0000255" key="1">
    <source>
        <dbReference type="HAMAP-Rule" id="MF_00098"/>
    </source>
</evidence>
<evidence type="ECO:0000305" key="2"/>
<keyword id="KW-0030">Aminoacyl-tRNA synthetase</keyword>
<keyword id="KW-0067">ATP-binding</keyword>
<keyword id="KW-0963">Cytoplasm</keyword>
<keyword id="KW-0436">Ligase</keyword>
<keyword id="KW-0479">Metal-binding</keyword>
<keyword id="KW-0547">Nucleotide-binding</keyword>
<keyword id="KW-0648">Protein biosynthesis</keyword>
<keyword id="KW-0694">RNA-binding</keyword>
<keyword id="KW-0820">tRNA-binding</keyword>
<keyword id="KW-0862">Zinc</keyword>
<gene>
    <name evidence="1" type="primary">metG</name>
    <name type="ordered locus">VC0395_A0554</name>
    <name type="ordered locus">VC395_1050</name>
</gene>
<reference key="1">
    <citation type="submission" date="2007-03" db="EMBL/GenBank/DDBJ databases">
        <authorList>
            <person name="Heidelberg J."/>
        </authorList>
    </citation>
    <scope>NUCLEOTIDE SEQUENCE [LARGE SCALE GENOMIC DNA]</scope>
    <source>
        <strain>ATCC 39541 / Classical Ogawa 395 / O395</strain>
    </source>
</reference>
<reference key="2">
    <citation type="journal article" date="2008" name="PLoS ONE">
        <title>A recalibrated molecular clock and independent origins for the cholera pandemic clones.</title>
        <authorList>
            <person name="Feng L."/>
            <person name="Reeves P.R."/>
            <person name="Lan R."/>
            <person name="Ren Y."/>
            <person name="Gao C."/>
            <person name="Zhou Z."/>
            <person name="Ren Y."/>
            <person name="Cheng J."/>
            <person name="Wang W."/>
            <person name="Wang J."/>
            <person name="Qian W."/>
            <person name="Li D."/>
            <person name="Wang L."/>
        </authorList>
    </citation>
    <scope>NUCLEOTIDE SEQUENCE [LARGE SCALE GENOMIC DNA]</scope>
    <source>
        <strain>ATCC 39541 / Classical Ogawa 395 / O395</strain>
    </source>
</reference>
<feature type="chain" id="PRO_0000331925" description="Methionine--tRNA ligase">
    <location>
        <begin position="1"/>
        <end position="683"/>
    </location>
</feature>
<feature type="domain" description="tRNA-binding" evidence="1">
    <location>
        <begin position="582"/>
        <end position="683"/>
    </location>
</feature>
<feature type="short sequence motif" description="'HIGH' region">
    <location>
        <begin position="15"/>
        <end position="25"/>
    </location>
</feature>
<feature type="short sequence motif" description="'KMSKS' region">
    <location>
        <begin position="332"/>
        <end position="336"/>
    </location>
</feature>
<feature type="binding site" evidence="1">
    <location>
        <position position="146"/>
    </location>
    <ligand>
        <name>Zn(2+)</name>
        <dbReference type="ChEBI" id="CHEBI:29105"/>
    </ligand>
</feature>
<feature type="binding site" evidence="1">
    <location>
        <position position="149"/>
    </location>
    <ligand>
        <name>Zn(2+)</name>
        <dbReference type="ChEBI" id="CHEBI:29105"/>
    </ligand>
</feature>
<feature type="binding site" evidence="1">
    <location>
        <position position="159"/>
    </location>
    <ligand>
        <name>Zn(2+)</name>
        <dbReference type="ChEBI" id="CHEBI:29105"/>
    </ligand>
</feature>
<feature type="binding site" evidence="1">
    <location>
        <position position="162"/>
    </location>
    <ligand>
        <name>Zn(2+)</name>
        <dbReference type="ChEBI" id="CHEBI:29105"/>
    </ligand>
</feature>
<feature type="binding site" evidence="1">
    <location>
        <position position="335"/>
    </location>
    <ligand>
        <name>ATP</name>
        <dbReference type="ChEBI" id="CHEBI:30616"/>
    </ligand>
</feature>
<sequence>MANDPRKLLVTCALPYANGSIHLGHMLEHIQADIWVRYQRLRGNTVNFICADDAHGTPIMLKAQQMGMTPEAMIEMVSEEHQRDFAGFDISFDNYHSTHSDENRELASHIYLQLKKNGFISSRTISQLFDPEKEMFLPDRFVKGTCPKCKSEDQYGDNCDACGETYSPTELINPKSAVSGATPVMKDSEHFFFDLPQFESMLKEWTRSGSLQSETANKMQEWFEGGLQQWDISRDAPYFGFEIPGEKDKFFYVWLDAPIGYMGSFKNLCDKRGDLNFNEYWNKDSKTELYHFIGKDIVYFHSLFWPAMLDGSGFRKPTNVFVHGYVTVNGAKMSKSKGTFVKASTYLNHLDPECLRYYYAAKLNNRIDDLDLNLEDFTQRVNADVVNKIVNLASRNAGFITKRFDGKLSAHFAEPELYAEFAGAADRIAELFEAREFGRAIREITALADKANQYVDEKAPWVVAKQEGQDQALQDICTVGINLFRILMTYLKPVMPALAERTEAFLNQELTWEGVATPLTDHAVTPFKALFNRIDPKQVEAMIEASKAEAAAEKAAADAAKPKSAETELSKDPLAAEIEFDDFAKVDLRIAKILSCEAVEKSDKLLKFELDIGGETRQVFSGIKSAYQPEDLIGKYTVVVANLKPRKMKFGMSEGMILAAGPGGSDLWLLEPHQGAQAGMRVM</sequence>
<accession>A5F2P8</accession>
<accession>C3LZ46</accession>
<dbReference type="EC" id="6.1.1.10" evidence="1"/>
<dbReference type="EMBL" id="CP000627">
    <property type="protein sequence ID" value="ABQ19760.1"/>
    <property type="status" value="ALT_INIT"/>
    <property type="molecule type" value="Genomic_DNA"/>
</dbReference>
<dbReference type="EMBL" id="CP001235">
    <property type="protein sequence ID" value="ACP09062.1"/>
    <property type="status" value="ALT_INIT"/>
    <property type="molecule type" value="Genomic_DNA"/>
</dbReference>
<dbReference type="RefSeq" id="WP_001262550.1">
    <property type="nucleotide sequence ID" value="NZ_JAACZH010000005.1"/>
</dbReference>
<dbReference type="SMR" id="A5F2P8"/>
<dbReference type="KEGG" id="vco:VC0395_A0554"/>
<dbReference type="KEGG" id="vcr:VC395_1050"/>
<dbReference type="PATRIC" id="fig|345073.21.peg.1018"/>
<dbReference type="eggNOG" id="COG0073">
    <property type="taxonomic scope" value="Bacteria"/>
</dbReference>
<dbReference type="eggNOG" id="COG0143">
    <property type="taxonomic scope" value="Bacteria"/>
</dbReference>
<dbReference type="HOGENOM" id="CLU_009710_7_0_6"/>
<dbReference type="OrthoDB" id="9810191at2"/>
<dbReference type="Proteomes" id="UP000000249">
    <property type="component" value="Chromosome 2"/>
</dbReference>
<dbReference type="GO" id="GO:0005829">
    <property type="term" value="C:cytosol"/>
    <property type="evidence" value="ECO:0007669"/>
    <property type="project" value="TreeGrafter"/>
</dbReference>
<dbReference type="GO" id="GO:0005524">
    <property type="term" value="F:ATP binding"/>
    <property type="evidence" value="ECO:0007669"/>
    <property type="project" value="UniProtKB-UniRule"/>
</dbReference>
<dbReference type="GO" id="GO:0046872">
    <property type="term" value="F:metal ion binding"/>
    <property type="evidence" value="ECO:0007669"/>
    <property type="project" value="UniProtKB-KW"/>
</dbReference>
<dbReference type="GO" id="GO:0004825">
    <property type="term" value="F:methionine-tRNA ligase activity"/>
    <property type="evidence" value="ECO:0007669"/>
    <property type="project" value="UniProtKB-UniRule"/>
</dbReference>
<dbReference type="GO" id="GO:0000049">
    <property type="term" value="F:tRNA binding"/>
    <property type="evidence" value="ECO:0007669"/>
    <property type="project" value="UniProtKB-KW"/>
</dbReference>
<dbReference type="GO" id="GO:0006431">
    <property type="term" value="P:methionyl-tRNA aminoacylation"/>
    <property type="evidence" value="ECO:0007669"/>
    <property type="project" value="UniProtKB-UniRule"/>
</dbReference>
<dbReference type="CDD" id="cd07957">
    <property type="entry name" value="Anticodon_Ia_Met"/>
    <property type="match status" value="1"/>
</dbReference>
<dbReference type="CDD" id="cd00814">
    <property type="entry name" value="MetRS_core"/>
    <property type="match status" value="1"/>
</dbReference>
<dbReference type="CDD" id="cd02800">
    <property type="entry name" value="tRNA_bind_EcMetRS_like"/>
    <property type="match status" value="1"/>
</dbReference>
<dbReference type="FunFam" id="1.10.730.10:FF:000005">
    <property type="entry name" value="Methionine--tRNA ligase"/>
    <property type="match status" value="1"/>
</dbReference>
<dbReference type="FunFam" id="2.20.28.20:FF:000001">
    <property type="entry name" value="Methionine--tRNA ligase"/>
    <property type="match status" value="1"/>
</dbReference>
<dbReference type="FunFam" id="2.40.50.140:FF:000042">
    <property type="entry name" value="Methionine--tRNA ligase"/>
    <property type="match status" value="1"/>
</dbReference>
<dbReference type="Gene3D" id="3.40.50.620">
    <property type="entry name" value="HUPs"/>
    <property type="match status" value="1"/>
</dbReference>
<dbReference type="Gene3D" id="1.10.730.10">
    <property type="entry name" value="Isoleucyl-tRNA Synthetase, Domain 1"/>
    <property type="match status" value="1"/>
</dbReference>
<dbReference type="Gene3D" id="2.20.28.20">
    <property type="entry name" value="Methionyl-tRNA synthetase, Zn-domain"/>
    <property type="match status" value="1"/>
</dbReference>
<dbReference type="Gene3D" id="2.40.50.140">
    <property type="entry name" value="Nucleic acid-binding proteins"/>
    <property type="match status" value="1"/>
</dbReference>
<dbReference type="HAMAP" id="MF_00098">
    <property type="entry name" value="Met_tRNA_synth_type1"/>
    <property type="match status" value="1"/>
</dbReference>
<dbReference type="InterPro" id="IPR001412">
    <property type="entry name" value="aa-tRNA-synth_I_CS"/>
</dbReference>
<dbReference type="InterPro" id="IPR041872">
    <property type="entry name" value="Anticodon_Met"/>
</dbReference>
<dbReference type="InterPro" id="IPR004495">
    <property type="entry name" value="Met-tRNA-synth_bsu_C"/>
</dbReference>
<dbReference type="InterPro" id="IPR023458">
    <property type="entry name" value="Met-tRNA_ligase_1"/>
</dbReference>
<dbReference type="InterPro" id="IPR014758">
    <property type="entry name" value="Met-tRNA_synth"/>
</dbReference>
<dbReference type="InterPro" id="IPR015413">
    <property type="entry name" value="Methionyl/Leucyl_tRNA_Synth"/>
</dbReference>
<dbReference type="InterPro" id="IPR033911">
    <property type="entry name" value="MetRS_core"/>
</dbReference>
<dbReference type="InterPro" id="IPR029038">
    <property type="entry name" value="MetRS_Zn"/>
</dbReference>
<dbReference type="InterPro" id="IPR012340">
    <property type="entry name" value="NA-bd_OB-fold"/>
</dbReference>
<dbReference type="InterPro" id="IPR014729">
    <property type="entry name" value="Rossmann-like_a/b/a_fold"/>
</dbReference>
<dbReference type="InterPro" id="IPR002547">
    <property type="entry name" value="tRNA-bd_dom"/>
</dbReference>
<dbReference type="InterPro" id="IPR009080">
    <property type="entry name" value="tRNAsynth_Ia_anticodon-bd"/>
</dbReference>
<dbReference type="NCBIfam" id="TIGR00398">
    <property type="entry name" value="metG"/>
    <property type="match status" value="1"/>
</dbReference>
<dbReference type="NCBIfam" id="TIGR00399">
    <property type="entry name" value="metG_C_term"/>
    <property type="match status" value="1"/>
</dbReference>
<dbReference type="NCBIfam" id="NF001100">
    <property type="entry name" value="PRK00133.1"/>
    <property type="match status" value="1"/>
</dbReference>
<dbReference type="PANTHER" id="PTHR45765">
    <property type="entry name" value="METHIONINE--TRNA LIGASE"/>
    <property type="match status" value="1"/>
</dbReference>
<dbReference type="PANTHER" id="PTHR45765:SF1">
    <property type="entry name" value="METHIONINE--TRNA LIGASE, CYTOPLASMIC"/>
    <property type="match status" value="1"/>
</dbReference>
<dbReference type="Pfam" id="PF19303">
    <property type="entry name" value="Anticodon_3"/>
    <property type="match status" value="1"/>
</dbReference>
<dbReference type="Pfam" id="PF09334">
    <property type="entry name" value="tRNA-synt_1g"/>
    <property type="match status" value="1"/>
</dbReference>
<dbReference type="Pfam" id="PF01588">
    <property type="entry name" value="tRNA_bind"/>
    <property type="match status" value="1"/>
</dbReference>
<dbReference type="PRINTS" id="PR01041">
    <property type="entry name" value="TRNASYNTHMET"/>
</dbReference>
<dbReference type="SUPFAM" id="SSF47323">
    <property type="entry name" value="Anticodon-binding domain of a subclass of class I aminoacyl-tRNA synthetases"/>
    <property type="match status" value="1"/>
</dbReference>
<dbReference type="SUPFAM" id="SSF57770">
    <property type="entry name" value="Methionyl-tRNA synthetase (MetRS), Zn-domain"/>
    <property type="match status" value="1"/>
</dbReference>
<dbReference type="SUPFAM" id="SSF50249">
    <property type="entry name" value="Nucleic acid-binding proteins"/>
    <property type="match status" value="1"/>
</dbReference>
<dbReference type="SUPFAM" id="SSF52374">
    <property type="entry name" value="Nucleotidylyl transferase"/>
    <property type="match status" value="1"/>
</dbReference>
<dbReference type="PROSITE" id="PS00178">
    <property type="entry name" value="AA_TRNA_LIGASE_I"/>
    <property type="match status" value="1"/>
</dbReference>
<dbReference type="PROSITE" id="PS50886">
    <property type="entry name" value="TRBD"/>
    <property type="match status" value="1"/>
</dbReference>
<protein>
    <recommendedName>
        <fullName evidence="1">Methionine--tRNA ligase</fullName>
        <ecNumber evidence="1">6.1.1.10</ecNumber>
    </recommendedName>
    <alternativeName>
        <fullName evidence="1">Methionyl-tRNA synthetase</fullName>
        <shortName evidence="1">MetRS</shortName>
    </alternativeName>
</protein>
<proteinExistence type="inferred from homology"/>
<organism>
    <name type="scientific">Vibrio cholerae serotype O1 (strain ATCC 39541 / Classical Ogawa 395 / O395)</name>
    <dbReference type="NCBI Taxonomy" id="345073"/>
    <lineage>
        <taxon>Bacteria</taxon>
        <taxon>Pseudomonadati</taxon>
        <taxon>Pseudomonadota</taxon>
        <taxon>Gammaproteobacteria</taxon>
        <taxon>Vibrionales</taxon>
        <taxon>Vibrionaceae</taxon>
        <taxon>Vibrio</taxon>
    </lineage>
</organism>